<name>RS17_ALLAM</name>
<reference key="1">
    <citation type="journal article" date="2009" name="J. Bacteriol.">
        <title>Genome sequences of three Agrobacterium biovars help elucidate the evolution of multichromosome genomes in bacteria.</title>
        <authorList>
            <person name="Slater S.C."/>
            <person name="Goldman B.S."/>
            <person name="Goodner B."/>
            <person name="Setubal J.C."/>
            <person name="Farrand S.K."/>
            <person name="Nester E.W."/>
            <person name="Burr T.J."/>
            <person name="Banta L."/>
            <person name="Dickerman A.W."/>
            <person name="Paulsen I."/>
            <person name="Otten L."/>
            <person name="Suen G."/>
            <person name="Welch R."/>
            <person name="Almeida N.F."/>
            <person name="Arnold F."/>
            <person name="Burton O.T."/>
            <person name="Du Z."/>
            <person name="Ewing A."/>
            <person name="Godsy E."/>
            <person name="Heisel S."/>
            <person name="Houmiel K.L."/>
            <person name="Jhaveri J."/>
            <person name="Lu J."/>
            <person name="Miller N.M."/>
            <person name="Norton S."/>
            <person name="Chen Q."/>
            <person name="Phoolcharoen W."/>
            <person name="Ohlin V."/>
            <person name="Ondrusek D."/>
            <person name="Pride N."/>
            <person name="Stricklin S.L."/>
            <person name="Sun J."/>
            <person name="Wheeler C."/>
            <person name="Wilson L."/>
            <person name="Zhu H."/>
            <person name="Wood D.W."/>
        </authorList>
    </citation>
    <scope>NUCLEOTIDE SEQUENCE [LARGE SCALE GENOMIC DNA]</scope>
    <source>
        <strain>ATCC BAA-846 / DSM 112012 / S4</strain>
    </source>
</reference>
<sequence>MPKRILQGVVVSDKNEKTVVVRVERRFAHPLLQKTVRRSKKYKAHDESNQYKIGDVVSIEECAPISKDKCWTVVSAQA</sequence>
<keyword id="KW-1185">Reference proteome</keyword>
<keyword id="KW-0687">Ribonucleoprotein</keyword>
<keyword id="KW-0689">Ribosomal protein</keyword>
<keyword id="KW-0694">RNA-binding</keyword>
<keyword id="KW-0699">rRNA-binding</keyword>
<feature type="chain" id="PRO_1000166454" description="Small ribosomal subunit protein uS17">
    <location>
        <begin position="1"/>
        <end position="78"/>
    </location>
</feature>
<evidence type="ECO:0000255" key="1">
    <source>
        <dbReference type="HAMAP-Rule" id="MF_01345"/>
    </source>
</evidence>
<evidence type="ECO:0000305" key="2"/>
<organism>
    <name type="scientific">Allorhizobium ampelinum (strain ATCC BAA-846 / DSM 112012 / S4)</name>
    <name type="common">Agrobacterium vitis (strain S4)</name>
    <dbReference type="NCBI Taxonomy" id="311402"/>
    <lineage>
        <taxon>Bacteria</taxon>
        <taxon>Pseudomonadati</taxon>
        <taxon>Pseudomonadota</taxon>
        <taxon>Alphaproteobacteria</taxon>
        <taxon>Hyphomicrobiales</taxon>
        <taxon>Rhizobiaceae</taxon>
        <taxon>Rhizobium/Agrobacterium group</taxon>
        <taxon>Allorhizobium</taxon>
        <taxon>Allorhizobium ampelinum</taxon>
    </lineage>
</organism>
<dbReference type="EMBL" id="CP000633">
    <property type="protein sequence ID" value="ACM36326.1"/>
    <property type="molecule type" value="Genomic_DNA"/>
</dbReference>
<dbReference type="RefSeq" id="WP_015915747.1">
    <property type="nucleotide sequence ID" value="NC_011989.1"/>
</dbReference>
<dbReference type="SMR" id="B9JVP6"/>
<dbReference type="STRING" id="311402.Avi_1849"/>
<dbReference type="GeneID" id="60682412"/>
<dbReference type="KEGG" id="avi:Avi_1849"/>
<dbReference type="eggNOG" id="COG0186">
    <property type="taxonomic scope" value="Bacteria"/>
</dbReference>
<dbReference type="HOGENOM" id="CLU_073626_1_1_5"/>
<dbReference type="Proteomes" id="UP000001596">
    <property type="component" value="Chromosome 1"/>
</dbReference>
<dbReference type="GO" id="GO:0022627">
    <property type="term" value="C:cytosolic small ribosomal subunit"/>
    <property type="evidence" value="ECO:0007669"/>
    <property type="project" value="TreeGrafter"/>
</dbReference>
<dbReference type="GO" id="GO:0019843">
    <property type="term" value="F:rRNA binding"/>
    <property type="evidence" value="ECO:0007669"/>
    <property type="project" value="UniProtKB-UniRule"/>
</dbReference>
<dbReference type="GO" id="GO:0003735">
    <property type="term" value="F:structural constituent of ribosome"/>
    <property type="evidence" value="ECO:0007669"/>
    <property type="project" value="InterPro"/>
</dbReference>
<dbReference type="GO" id="GO:0006412">
    <property type="term" value="P:translation"/>
    <property type="evidence" value="ECO:0007669"/>
    <property type="project" value="UniProtKB-UniRule"/>
</dbReference>
<dbReference type="CDD" id="cd00364">
    <property type="entry name" value="Ribosomal_uS17"/>
    <property type="match status" value="1"/>
</dbReference>
<dbReference type="Gene3D" id="2.40.50.140">
    <property type="entry name" value="Nucleic acid-binding proteins"/>
    <property type="match status" value="1"/>
</dbReference>
<dbReference type="HAMAP" id="MF_01345_B">
    <property type="entry name" value="Ribosomal_uS17_B"/>
    <property type="match status" value="1"/>
</dbReference>
<dbReference type="InterPro" id="IPR012340">
    <property type="entry name" value="NA-bd_OB-fold"/>
</dbReference>
<dbReference type="InterPro" id="IPR000266">
    <property type="entry name" value="Ribosomal_uS17"/>
</dbReference>
<dbReference type="InterPro" id="IPR019984">
    <property type="entry name" value="Ribosomal_uS17_bact/chlr"/>
</dbReference>
<dbReference type="NCBIfam" id="NF004123">
    <property type="entry name" value="PRK05610.1"/>
    <property type="match status" value="1"/>
</dbReference>
<dbReference type="NCBIfam" id="TIGR03635">
    <property type="entry name" value="uS17_bact"/>
    <property type="match status" value="1"/>
</dbReference>
<dbReference type="PANTHER" id="PTHR10744">
    <property type="entry name" value="40S RIBOSOMAL PROTEIN S11 FAMILY MEMBER"/>
    <property type="match status" value="1"/>
</dbReference>
<dbReference type="PANTHER" id="PTHR10744:SF1">
    <property type="entry name" value="SMALL RIBOSOMAL SUBUNIT PROTEIN US17M"/>
    <property type="match status" value="1"/>
</dbReference>
<dbReference type="Pfam" id="PF00366">
    <property type="entry name" value="Ribosomal_S17"/>
    <property type="match status" value="1"/>
</dbReference>
<dbReference type="PRINTS" id="PR00973">
    <property type="entry name" value="RIBOSOMALS17"/>
</dbReference>
<dbReference type="SUPFAM" id="SSF50249">
    <property type="entry name" value="Nucleic acid-binding proteins"/>
    <property type="match status" value="1"/>
</dbReference>
<proteinExistence type="inferred from homology"/>
<comment type="function">
    <text evidence="1">One of the primary rRNA binding proteins, it binds specifically to the 5'-end of 16S ribosomal RNA.</text>
</comment>
<comment type="subunit">
    <text evidence="1">Part of the 30S ribosomal subunit.</text>
</comment>
<comment type="similarity">
    <text evidence="1">Belongs to the universal ribosomal protein uS17 family.</text>
</comment>
<protein>
    <recommendedName>
        <fullName evidence="1">Small ribosomal subunit protein uS17</fullName>
    </recommendedName>
    <alternativeName>
        <fullName evidence="2">30S ribosomal protein S17</fullName>
    </alternativeName>
</protein>
<accession>B9JVP6</accession>
<gene>
    <name evidence="1" type="primary">rpsQ</name>
    <name type="ordered locus">Avi_1849</name>
</gene>